<sequence>MKLAVIGSGTMGSGIVQTFASCGHDVCLKSRTQGAIDKCLALLDKNLTKLVTKGKWMKATKAEILSHVSSTTNYEDLKDMDLIIEASVEDMNIKKDVFKLLDELCKEDTILATNTSSLSITEIASSTKRPDKVIGMHFFNPVPMMKLVEVISGQLTSKVTFDTVFELSKSINKVPVDVSESPGFVVNRILIPMINEAVGIYADGVASKEEIDEAMKLGANHPMGPLALGDLIGLDVVLAIMNVLYTEFGDTKYTAHPLLAKMVRANQLGRKTKIGFYDYNK</sequence>
<organism>
    <name type="scientific">Clostridioides difficile</name>
    <name type="common">Peptoclostridium difficile</name>
    <dbReference type="NCBI Taxonomy" id="1496"/>
    <lineage>
        <taxon>Bacteria</taxon>
        <taxon>Bacillati</taxon>
        <taxon>Bacillota</taxon>
        <taxon>Clostridia</taxon>
        <taxon>Peptostreptococcales</taxon>
        <taxon>Peptostreptococcaceae</taxon>
        <taxon>Clostridioides</taxon>
    </lineage>
</organism>
<accession>P45364</accession>
<keyword id="KW-0276">Fatty acid metabolism</keyword>
<keyword id="KW-0443">Lipid metabolism</keyword>
<keyword id="KW-0521">NADP</keyword>
<keyword id="KW-0560">Oxidoreductase</keyword>
<protein>
    <recommendedName>
        <fullName>3-hydroxybutyryl-CoA dehydrogenase</fullName>
        <ecNumber>1.1.1.157</ecNumber>
    </recommendedName>
    <alternativeName>
        <fullName>Beta-hydroxybutyryl-CoA dehydrogenase</fullName>
        <shortName>BHBD</shortName>
    </alternativeName>
</protein>
<reference key="1">
    <citation type="journal article" date="1994" name="FEMS Microbiol. Lett.">
        <title>Genes encoding homologues of three consecutive enzymes in the butyrate/butanol-producing pathway of Clostridium acetobutylicum are clustered on the Clostridium difficile chromosome.</title>
        <authorList>
            <person name="Mullany P."/>
            <person name="Clayton C.L."/>
            <person name="Pallen M.J."/>
            <person name="Slone R."/>
            <person name="Al-Saleh A."/>
            <person name="Tabaqchali S."/>
        </authorList>
    </citation>
    <scope>NUCLEOTIDE SEQUENCE [GENOMIC DNA]</scope>
    <source>
        <strain>E</strain>
    </source>
</reference>
<name>HBD_CLODI</name>
<dbReference type="EC" id="1.1.1.157"/>
<dbReference type="EMBL" id="X79899">
    <property type="protein sequence ID" value="CAA56272.1"/>
    <property type="molecule type" value="Genomic_DNA"/>
</dbReference>
<dbReference type="PIR" id="I40679">
    <property type="entry name" value="I40679"/>
</dbReference>
<dbReference type="SMR" id="P45364"/>
<dbReference type="UniPathway" id="UPA00863"/>
<dbReference type="GO" id="GO:0008691">
    <property type="term" value="F:3-hydroxybutyryl-CoA dehydrogenase activity"/>
    <property type="evidence" value="ECO:0007669"/>
    <property type="project" value="UniProtKB-EC"/>
</dbReference>
<dbReference type="GO" id="GO:0070403">
    <property type="term" value="F:NAD+ binding"/>
    <property type="evidence" value="ECO:0007669"/>
    <property type="project" value="InterPro"/>
</dbReference>
<dbReference type="GO" id="GO:0019605">
    <property type="term" value="P:butyrate metabolic process"/>
    <property type="evidence" value="ECO:0007669"/>
    <property type="project" value="UniProtKB-UniPathway"/>
</dbReference>
<dbReference type="GO" id="GO:0006635">
    <property type="term" value="P:fatty acid beta-oxidation"/>
    <property type="evidence" value="ECO:0007669"/>
    <property type="project" value="TreeGrafter"/>
</dbReference>
<dbReference type="FunFam" id="3.40.50.720:FF:000009">
    <property type="entry name" value="Fatty oxidation complex, alpha subunit"/>
    <property type="match status" value="1"/>
</dbReference>
<dbReference type="Gene3D" id="1.10.1040.10">
    <property type="entry name" value="N-(1-d-carboxylethyl)-l-norvaline Dehydrogenase, domain 2"/>
    <property type="match status" value="1"/>
</dbReference>
<dbReference type="Gene3D" id="3.40.50.720">
    <property type="entry name" value="NAD(P)-binding Rossmann-like Domain"/>
    <property type="match status" value="1"/>
</dbReference>
<dbReference type="InterPro" id="IPR022694">
    <property type="entry name" value="3-OHacyl-CoA_DH"/>
</dbReference>
<dbReference type="InterPro" id="IPR006180">
    <property type="entry name" value="3-OHacyl-CoA_DH_CS"/>
</dbReference>
<dbReference type="InterPro" id="IPR006176">
    <property type="entry name" value="3-OHacyl-CoA_DH_NAD-bd"/>
</dbReference>
<dbReference type="InterPro" id="IPR006108">
    <property type="entry name" value="3HC_DH_C"/>
</dbReference>
<dbReference type="InterPro" id="IPR008927">
    <property type="entry name" value="6-PGluconate_DH-like_C_sf"/>
</dbReference>
<dbReference type="InterPro" id="IPR013328">
    <property type="entry name" value="6PGD_dom2"/>
</dbReference>
<dbReference type="InterPro" id="IPR036291">
    <property type="entry name" value="NAD(P)-bd_dom_sf"/>
</dbReference>
<dbReference type="NCBIfam" id="NF004474">
    <property type="entry name" value="PRK05808.1"/>
    <property type="match status" value="1"/>
</dbReference>
<dbReference type="PANTHER" id="PTHR48075">
    <property type="entry name" value="3-HYDROXYACYL-COA DEHYDROGENASE FAMILY PROTEIN"/>
    <property type="match status" value="1"/>
</dbReference>
<dbReference type="PANTHER" id="PTHR48075:SF5">
    <property type="entry name" value="3-HYDROXYBUTYRYL-COA DEHYDROGENASE"/>
    <property type="match status" value="1"/>
</dbReference>
<dbReference type="Pfam" id="PF00725">
    <property type="entry name" value="3HCDH"/>
    <property type="match status" value="1"/>
</dbReference>
<dbReference type="Pfam" id="PF02737">
    <property type="entry name" value="3HCDH_N"/>
    <property type="match status" value="1"/>
</dbReference>
<dbReference type="PIRSF" id="PIRSF000105">
    <property type="entry name" value="HCDH"/>
    <property type="match status" value="1"/>
</dbReference>
<dbReference type="SUPFAM" id="SSF48179">
    <property type="entry name" value="6-phosphogluconate dehydrogenase C-terminal domain-like"/>
    <property type="match status" value="1"/>
</dbReference>
<dbReference type="SUPFAM" id="SSF51735">
    <property type="entry name" value="NAD(P)-binding Rossmann-fold domains"/>
    <property type="match status" value="1"/>
</dbReference>
<dbReference type="PROSITE" id="PS00067">
    <property type="entry name" value="3HCDH"/>
    <property type="match status" value="1"/>
</dbReference>
<gene>
    <name type="primary">hbd</name>
</gene>
<evidence type="ECO:0000250" key="1"/>
<evidence type="ECO:0000305" key="2"/>
<proteinExistence type="inferred from homology"/>
<comment type="catalytic activity">
    <reaction>
        <text>(3S)-3-hydroxybutanoyl-CoA + NADP(+) = acetoacetyl-CoA + NADPH + H(+)</text>
        <dbReference type="Rhea" id="RHEA:16197"/>
        <dbReference type="ChEBI" id="CHEBI:15378"/>
        <dbReference type="ChEBI" id="CHEBI:57286"/>
        <dbReference type="ChEBI" id="CHEBI:57316"/>
        <dbReference type="ChEBI" id="CHEBI:57783"/>
        <dbReference type="ChEBI" id="CHEBI:58349"/>
        <dbReference type="EC" id="1.1.1.157"/>
    </reaction>
</comment>
<comment type="pathway">
    <text>Lipid metabolism; butanoate metabolism.</text>
</comment>
<comment type="similarity">
    <text evidence="2">Belongs to the 3-hydroxyacyl-CoA dehydrogenase family.</text>
</comment>
<feature type="chain" id="PRO_0000109258" description="3-hydroxybutyryl-CoA dehydrogenase">
    <location>
        <begin position="1"/>
        <end position="281"/>
    </location>
</feature>
<feature type="site" description="Important for catalytic activity" evidence="1">
    <location>
        <position position="137"/>
    </location>
</feature>